<organism>
    <name type="scientific">Bartonella henselae (strain ATCC 49882 / DSM 28221 / CCUG 30454 / Houston 1)</name>
    <name type="common">Rochalimaea henselae</name>
    <dbReference type="NCBI Taxonomy" id="283166"/>
    <lineage>
        <taxon>Bacteria</taxon>
        <taxon>Pseudomonadati</taxon>
        <taxon>Pseudomonadota</taxon>
        <taxon>Alphaproteobacteria</taxon>
        <taxon>Hyphomicrobiales</taxon>
        <taxon>Bartonellaceae</taxon>
        <taxon>Bartonella</taxon>
    </lineage>
</organism>
<proteinExistence type="inferred from homology"/>
<accession>Q9KJG4</accession>
<gene>
    <name evidence="1" type="primary">rpoB</name>
    <name type="ordered locus">BH06100</name>
</gene>
<protein>
    <recommendedName>
        <fullName evidence="1">DNA-directed RNA polymerase subunit beta</fullName>
        <shortName evidence="1">RNAP subunit beta</shortName>
        <ecNumber evidence="1">2.7.7.6</ecNumber>
    </recommendedName>
    <alternativeName>
        <fullName evidence="1">RNA polymerase subunit beta</fullName>
    </alternativeName>
    <alternativeName>
        <fullName evidence="1">Transcriptase subunit beta</fullName>
    </alternativeName>
</protein>
<keyword id="KW-0240">DNA-directed RNA polymerase</keyword>
<keyword id="KW-0548">Nucleotidyltransferase</keyword>
<keyword id="KW-0804">Transcription</keyword>
<keyword id="KW-0808">Transferase</keyword>
<sequence>MAQTLAMTSQFNGRKRVRKFFGKIPEVAEMPNLIEVQKASYDQFLMIEEPKGGRPDEGLQAVFKSVFPISDFSGTAMLEFVGYQFDSPKFDVEECRQRDLTYAAPLKVILRLIVFDVDEDTGSKDIKDIKEQGVYMGDMPLMTTNGTFIVNGTERVIVSQMHRSPGVFFDHDKGKSHSSGKFLFAARVIPYRGSWLDIEFDAKDIIYARIDRRRKIPVTSLLMALGMDASDILSTFYNKVTYERDGDGWRIPYSVDRFKGMKLVSDLIDADSGEVVAEAGKKLTVRAAKALAEKGLKAVKVSEDDLLGSYLAEDIVNYQTGEIYLEAGDEIDEKTLRVLFDVNADQIDILDIDHMNIGAYIRNTLKVDKNESRQDALFDIYRVMRPGEPPTMDTAEAMFHSLFFDPERYDLSAVGRVKMNLRMDLDCPDTVRVLRQEDILAVVKMLVELRDGRGEIDDIDNLGNRRVRSVGELMENQYRIGLLRMERAIKERMSSVEIDTVMPQDLINAKPAAAAVREFFGSSQLSQFMDQTNPLSEITHKRRLSALGPGGLTRERAGFEVRDVHPTHYGRICPIETPEGPNIGLINSLATFARVNKYGFIESPYRKIIDGKVTTEVIYLSAMEESKHYVAQANSSLDAEGRLSEEFVVCRHAGEVLMAPRDHVDLMDVSPKQLVSVAAALIPFLENDDANRALMGSNMQRQAVPLVRAEAPFVGTGMESIVARDSGAAVAARRSGIVDQVDATRIVIRATEDLDPSKSGVDIYRLQKFQRSNQSTCINQRPLVHVGDRVEKGNIIADGPSTDLGDLALGRNVLVAFMPWNGYNYEDSILLSERIVADDVFTSIHIEEFEVAARDTKLGPEEITRDIPNVAEEALRNLDEAGIIYIGAEVQPGDILVGKITPKGESPMTPEEKLLRAIFGEKASDVRDTSMRMPPGAFGTVVEVRVFNRHGVEKDERAMAIEREEIERLAKDRDDEQSILDRNVYARLTDMLVGKVAVEGPKGFSKNKKLDTTIMGHYPRSQWWQFTVEDEKLQNEIEALRNQYDESKEALQRRFMDKVEKVQRGDEMPPGVMKMVKVFVAVKRKIQPGDKMAGRHGNKGVVSRILPIEDMPFLEDGTHADIVLNPLGVPSRMNVGQILETHLGWACAGMGKKIGDLVDLYQETGDILPLRQRIENLMPDDDHNEPVRQYDNESLYKLALQMRKGVSIATPVFDGAHEADINMMLEDAGLDSSGQVTLYDGRTGEPFDRPVTVGYIYMLKLHHLVDDKIHARSIGPYSLVTQQPLGGKAQFGGQRFGEMEVWALEAYGAAYTLQEMLTVKSDDVAGRTKVYEAIVRGDDTFEAGIPESFNVLVKEMRSLALNVELDDARELIAQRALSDTTEQ</sequence>
<evidence type="ECO:0000255" key="1">
    <source>
        <dbReference type="HAMAP-Rule" id="MF_01321"/>
    </source>
</evidence>
<dbReference type="EC" id="2.7.7.6" evidence="1"/>
<dbReference type="EMBL" id="AF171070">
    <property type="protein sequence ID" value="AAF87049.1"/>
    <property type="molecule type" value="Genomic_DNA"/>
</dbReference>
<dbReference type="EMBL" id="BX897699">
    <property type="protein sequence ID" value="CAF27414.1"/>
    <property type="molecule type" value="Genomic_DNA"/>
</dbReference>
<dbReference type="RefSeq" id="WP_011180534.1">
    <property type="nucleotide sequence ID" value="NZ_LRIJ02000001.1"/>
</dbReference>
<dbReference type="SMR" id="Q9KJG4"/>
<dbReference type="PaxDb" id="283166-BH06100"/>
<dbReference type="EnsemblBacteria" id="CAF27414">
    <property type="protein sequence ID" value="CAF27414"/>
    <property type="gene ID" value="BH06100"/>
</dbReference>
<dbReference type="GeneID" id="92985664"/>
<dbReference type="KEGG" id="bhe:BH06100"/>
<dbReference type="eggNOG" id="COG0085">
    <property type="taxonomic scope" value="Bacteria"/>
</dbReference>
<dbReference type="OrthoDB" id="9803954at2"/>
<dbReference type="Proteomes" id="UP000000421">
    <property type="component" value="Chromosome"/>
</dbReference>
<dbReference type="GO" id="GO:0000428">
    <property type="term" value="C:DNA-directed RNA polymerase complex"/>
    <property type="evidence" value="ECO:0007669"/>
    <property type="project" value="UniProtKB-KW"/>
</dbReference>
<dbReference type="GO" id="GO:0003677">
    <property type="term" value="F:DNA binding"/>
    <property type="evidence" value="ECO:0007669"/>
    <property type="project" value="UniProtKB-UniRule"/>
</dbReference>
<dbReference type="GO" id="GO:0003899">
    <property type="term" value="F:DNA-directed RNA polymerase activity"/>
    <property type="evidence" value="ECO:0007669"/>
    <property type="project" value="UniProtKB-UniRule"/>
</dbReference>
<dbReference type="GO" id="GO:0032549">
    <property type="term" value="F:ribonucleoside binding"/>
    <property type="evidence" value="ECO:0007669"/>
    <property type="project" value="InterPro"/>
</dbReference>
<dbReference type="GO" id="GO:0006351">
    <property type="term" value="P:DNA-templated transcription"/>
    <property type="evidence" value="ECO:0007669"/>
    <property type="project" value="UniProtKB-UniRule"/>
</dbReference>
<dbReference type="CDD" id="cd00653">
    <property type="entry name" value="RNA_pol_B_RPB2"/>
    <property type="match status" value="1"/>
</dbReference>
<dbReference type="FunFam" id="2.40.50.100:FF:000006">
    <property type="entry name" value="DNA-directed RNA polymerase subunit beta"/>
    <property type="match status" value="1"/>
</dbReference>
<dbReference type="FunFam" id="3.90.1800.10:FF:000001">
    <property type="entry name" value="DNA-directed RNA polymerase subunit beta"/>
    <property type="match status" value="1"/>
</dbReference>
<dbReference type="Gene3D" id="2.40.50.100">
    <property type="match status" value="1"/>
</dbReference>
<dbReference type="Gene3D" id="2.40.50.150">
    <property type="match status" value="1"/>
</dbReference>
<dbReference type="Gene3D" id="3.90.1100.10">
    <property type="match status" value="2"/>
</dbReference>
<dbReference type="Gene3D" id="2.30.150.10">
    <property type="entry name" value="DNA-directed RNA polymerase, beta subunit, external 1 domain"/>
    <property type="match status" value="1"/>
</dbReference>
<dbReference type="Gene3D" id="2.40.270.10">
    <property type="entry name" value="DNA-directed RNA polymerase, subunit 2, domain 6"/>
    <property type="match status" value="2"/>
</dbReference>
<dbReference type="Gene3D" id="3.90.1800.10">
    <property type="entry name" value="RNA polymerase alpha subunit dimerisation domain"/>
    <property type="match status" value="1"/>
</dbReference>
<dbReference type="Gene3D" id="3.90.1110.10">
    <property type="entry name" value="RNA polymerase Rpb2, domain 2"/>
    <property type="match status" value="2"/>
</dbReference>
<dbReference type="HAMAP" id="MF_01321">
    <property type="entry name" value="RNApol_bact_RpoB"/>
    <property type="match status" value="1"/>
</dbReference>
<dbReference type="InterPro" id="IPR042107">
    <property type="entry name" value="DNA-dir_RNA_pol_bsu_ext_1_sf"/>
</dbReference>
<dbReference type="InterPro" id="IPR019462">
    <property type="entry name" value="DNA-dir_RNA_pol_bsu_external_1"/>
</dbReference>
<dbReference type="InterPro" id="IPR015712">
    <property type="entry name" value="DNA-dir_RNA_pol_su2"/>
</dbReference>
<dbReference type="InterPro" id="IPR007120">
    <property type="entry name" value="DNA-dir_RNAP_su2_dom"/>
</dbReference>
<dbReference type="InterPro" id="IPR037033">
    <property type="entry name" value="DNA-dir_RNAP_su2_hyb_sf"/>
</dbReference>
<dbReference type="InterPro" id="IPR010243">
    <property type="entry name" value="RNA_pol_bsu_bac"/>
</dbReference>
<dbReference type="InterPro" id="IPR007121">
    <property type="entry name" value="RNA_pol_bsu_CS"/>
</dbReference>
<dbReference type="InterPro" id="IPR007644">
    <property type="entry name" value="RNA_pol_bsu_protrusion"/>
</dbReference>
<dbReference type="InterPro" id="IPR007642">
    <property type="entry name" value="RNA_pol_Rpb2_2"/>
</dbReference>
<dbReference type="InterPro" id="IPR037034">
    <property type="entry name" value="RNA_pol_Rpb2_2_sf"/>
</dbReference>
<dbReference type="InterPro" id="IPR007645">
    <property type="entry name" value="RNA_pol_Rpb2_3"/>
</dbReference>
<dbReference type="InterPro" id="IPR007641">
    <property type="entry name" value="RNA_pol_Rpb2_7"/>
</dbReference>
<dbReference type="InterPro" id="IPR014724">
    <property type="entry name" value="RNA_pol_RPB2_OB-fold"/>
</dbReference>
<dbReference type="NCBIfam" id="NF001616">
    <property type="entry name" value="PRK00405.1"/>
    <property type="match status" value="1"/>
</dbReference>
<dbReference type="NCBIfam" id="TIGR02013">
    <property type="entry name" value="rpoB"/>
    <property type="match status" value="1"/>
</dbReference>
<dbReference type="PANTHER" id="PTHR20856">
    <property type="entry name" value="DNA-DIRECTED RNA POLYMERASE I SUBUNIT 2"/>
    <property type="match status" value="1"/>
</dbReference>
<dbReference type="Pfam" id="PF04563">
    <property type="entry name" value="RNA_pol_Rpb2_1"/>
    <property type="match status" value="1"/>
</dbReference>
<dbReference type="Pfam" id="PF04561">
    <property type="entry name" value="RNA_pol_Rpb2_2"/>
    <property type="match status" value="2"/>
</dbReference>
<dbReference type="Pfam" id="PF04565">
    <property type="entry name" value="RNA_pol_Rpb2_3"/>
    <property type="match status" value="1"/>
</dbReference>
<dbReference type="Pfam" id="PF10385">
    <property type="entry name" value="RNA_pol_Rpb2_45"/>
    <property type="match status" value="1"/>
</dbReference>
<dbReference type="Pfam" id="PF00562">
    <property type="entry name" value="RNA_pol_Rpb2_6"/>
    <property type="match status" value="1"/>
</dbReference>
<dbReference type="Pfam" id="PF04560">
    <property type="entry name" value="RNA_pol_Rpb2_7"/>
    <property type="match status" value="1"/>
</dbReference>
<dbReference type="SUPFAM" id="SSF64484">
    <property type="entry name" value="beta and beta-prime subunits of DNA dependent RNA-polymerase"/>
    <property type="match status" value="1"/>
</dbReference>
<dbReference type="PROSITE" id="PS01166">
    <property type="entry name" value="RNA_POL_BETA"/>
    <property type="match status" value="1"/>
</dbReference>
<comment type="function">
    <text evidence="1">DNA-dependent RNA polymerase catalyzes the transcription of DNA into RNA using the four ribonucleoside triphosphates as substrates.</text>
</comment>
<comment type="catalytic activity">
    <reaction evidence="1">
        <text>RNA(n) + a ribonucleoside 5'-triphosphate = RNA(n+1) + diphosphate</text>
        <dbReference type="Rhea" id="RHEA:21248"/>
        <dbReference type="Rhea" id="RHEA-COMP:14527"/>
        <dbReference type="Rhea" id="RHEA-COMP:17342"/>
        <dbReference type="ChEBI" id="CHEBI:33019"/>
        <dbReference type="ChEBI" id="CHEBI:61557"/>
        <dbReference type="ChEBI" id="CHEBI:140395"/>
        <dbReference type="EC" id="2.7.7.6"/>
    </reaction>
</comment>
<comment type="subunit">
    <text evidence="1">The RNAP catalytic core consists of 2 alpha, 1 beta, 1 beta' and 1 omega subunit. When a sigma factor is associated with the core the holoenzyme is formed, which can initiate transcription.</text>
</comment>
<comment type="similarity">
    <text evidence="1">Belongs to the RNA polymerase beta chain family.</text>
</comment>
<feature type="chain" id="PRO_0000047862" description="DNA-directed RNA polymerase subunit beta">
    <location>
        <begin position="1"/>
        <end position="1383"/>
    </location>
</feature>
<name>RPOB_BARHE</name>
<reference key="1">
    <citation type="journal article" date="2001" name="J. Clin. Microbiol.">
        <title>Use of rpoB gene analysis for detection and identification of Bartonella species.</title>
        <authorList>
            <person name="Renesto P."/>
            <person name="Gouvernet J."/>
            <person name="Drancourt M."/>
            <person name="Roux V."/>
            <person name="Raoult D."/>
        </authorList>
    </citation>
    <scope>NUCLEOTIDE SEQUENCE [GENOMIC DNA]</scope>
    <source>
        <strain>ATCC 49882 / DSM 28221 / CCUG 30454 / Houston 1</strain>
    </source>
</reference>
<reference key="2">
    <citation type="journal article" date="2004" name="Proc. Natl. Acad. Sci. U.S.A.">
        <title>The louse-borne human pathogen Bartonella quintana is a genomic derivative of the zoonotic agent Bartonella henselae.</title>
        <authorList>
            <person name="Alsmark U.C.M."/>
            <person name="Frank A.C."/>
            <person name="Karlberg E.O."/>
            <person name="Legault B.-A."/>
            <person name="Ardell D.H."/>
            <person name="Canbaeck B."/>
            <person name="Eriksson A.-S."/>
            <person name="Naeslund A.K."/>
            <person name="Handley S.A."/>
            <person name="Huvet M."/>
            <person name="La Scola B."/>
            <person name="Holmberg M."/>
            <person name="Andersson S.G.E."/>
        </authorList>
    </citation>
    <scope>NUCLEOTIDE SEQUENCE [LARGE SCALE GENOMIC DNA]</scope>
    <source>
        <strain>ATCC 49882 / DSM 28221 / CCUG 30454 / Houston 1</strain>
    </source>
</reference>